<comment type="function">
    <text evidence="1">This protein specifically catalyzes the removal of signal peptides from prolipoproteins.</text>
</comment>
<comment type="catalytic activity">
    <reaction evidence="1">
        <text>Release of signal peptides from bacterial membrane prolipoproteins. Hydrolyzes -Xaa-Yaa-Zaa-|-(S,diacylglyceryl)Cys-, in which Xaa is hydrophobic (preferably Leu), and Yaa (Ala or Ser) and Zaa (Gly or Ala) have small, neutral side chains.</text>
        <dbReference type="EC" id="3.4.23.36"/>
    </reaction>
</comment>
<comment type="pathway">
    <text evidence="1">Protein modification; lipoprotein biosynthesis (signal peptide cleavage).</text>
</comment>
<comment type="subcellular location">
    <subcellularLocation>
        <location evidence="1">Cell membrane</location>
        <topology evidence="1">Multi-pass membrane protein</topology>
    </subcellularLocation>
</comment>
<comment type="similarity">
    <text evidence="1">Belongs to the peptidase A8 family.</text>
</comment>
<feature type="chain" id="PRO_0000178793" description="Lipoprotein signal peptidase">
    <location>
        <begin position="1"/>
        <end position="154"/>
    </location>
</feature>
<feature type="transmembrane region" description="Helical" evidence="1">
    <location>
        <begin position="55"/>
        <end position="75"/>
    </location>
</feature>
<feature type="transmembrane region" description="Helical" evidence="1">
    <location>
        <begin position="84"/>
        <end position="104"/>
    </location>
</feature>
<feature type="transmembrane region" description="Helical" evidence="1">
    <location>
        <begin position="124"/>
        <end position="144"/>
    </location>
</feature>
<feature type="active site" evidence="1">
    <location>
        <position position="111"/>
    </location>
</feature>
<feature type="active site" evidence="1">
    <location>
        <position position="129"/>
    </location>
</feature>
<accession>Q8Y656</accession>
<sequence length="154" mass="17723">MYYYLITLAVIALDQLTKWIVVQNMEIGQKIEVIPGFLYWTSYRNDGAAWSILEGHMWFFYLITVVVIGIIIYIMQKYAKGKRLFSISLAFILGGAIGNFIDRVLHQEVVDFVQTVWGNYYFPIFNVADASLSVGVVLMLVYVFVDDRKTKGIK</sequence>
<gene>
    <name evidence="1" type="primary">lspA</name>
    <name type="synonym">lsp</name>
    <name type="ordered locus">lmo1844</name>
</gene>
<protein>
    <recommendedName>
        <fullName evidence="1">Lipoprotein signal peptidase</fullName>
        <ecNumber evidence="1">3.4.23.36</ecNumber>
    </recommendedName>
    <alternativeName>
        <fullName evidence="1">Prolipoprotein signal peptidase</fullName>
    </alternativeName>
    <alternativeName>
        <fullName evidence="1">Signal peptidase II</fullName>
        <shortName evidence="1">SPase II</shortName>
    </alternativeName>
</protein>
<proteinExistence type="inferred from homology"/>
<keyword id="KW-0064">Aspartyl protease</keyword>
<keyword id="KW-1003">Cell membrane</keyword>
<keyword id="KW-0378">Hydrolase</keyword>
<keyword id="KW-0472">Membrane</keyword>
<keyword id="KW-0645">Protease</keyword>
<keyword id="KW-1185">Reference proteome</keyword>
<keyword id="KW-0812">Transmembrane</keyword>
<keyword id="KW-1133">Transmembrane helix</keyword>
<organism>
    <name type="scientific">Listeria monocytogenes serovar 1/2a (strain ATCC BAA-679 / EGD-e)</name>
    <dbReference type="NCBI Taxonomy" id="169963"/>
    <lineage>
        <taxon>Bacteria</taxon>
        <taxon>Bacillati</taxon>
        <taxon>Bacillota</taxon>
        <taxon>Bacilli</taxon>
        <taxon>Bacillales</taxon>
        <taxon>Listeriaceae</taxon>
        <taxon>Listeria</taxon>
    </lineage>
</organism>
<name>LSPA_LISMO</name>
<reference key="1">
    <citation type="journal article" date="2001" name="Science">
        <title>Comparative genomics of Listeria species.</title>
        <authorList>
            <person name="Glaser P."/>
            <person name="Frangeul L."/>
            <person name="Buchrieser C."/>
            <person name="Rusniok C."/>
            <person name="Amend A."/>
            <person name="Baquero F."/>
            <person name="Berche P."/>
            <person name="Bloecker H."/>
            <person name="Brandt P."/>
            <person name="Chakraborty T."/>
            <person name="Charbit A."/>
            <person name="Chetouani F."/>
            <person name="Couve E."/>
            <person name="de Daruvar A."/>
            <person name="Dehoux P."/>
            <person name="Domann E."/>
            <person name="Dominguez-Bernal G."/>
            <person name="Duchaud E."/>
            <person name="Durant L."/>
            <person name="Dussurget O."/>
            <person name="Entian K.-D."/>
            <person name="Fsihi H."/>
            <person name="Garcia-del Portillo F."/>
            <person name="Garrido P."/>
            <person name="Gautier L."/>
            <person name="Goebel W."/>
            <person name="Gomez-Lopez N."/>
            <person name="Hain T."/>
            <person name="Hauf J."/>
            <person name="Jackson D."/>
            <person name="Jones L.-M."/>
            <person name="Kaerst U."/>
            <person name="Kreft J."/>
            <person name="Kuhn M."/>
            <person name="Kunst F."/>
            <person name="Kurapkat G."/>
            <person name="Madueno E."/>
            <person name="Maitournam A."/>
            <person name="Mata Vicente J."/>
            <person name="Ng E."/>
            <person name="Nedjari H."/>
            <person name="Nordsiek G."/>
            <person name="Novella S."/>
            <person name="de Pablos B."/>
            <person name="Perez-Diaz J.-C."/>
            <person name="Purcell R."/>
            <person name="Remmel B."/>
            <person name="Rose M."/>
            <person name="Schlueter T."/>
            <person name="Simoes N."/>
            <person name="Tierrez A."/>
            <person name="Vazquez-Boland J.-A."/>
            <person name="Voss H."/>
            <person name="Wehland J."/>
            <person name="Cossart P."/>
        </authorList>
    </citation>
    <scope>NUCLEOTIDE SEQUENCE [LARGE SCALE GENOMIC DNA]</scope>
    <source>
        <strain>ATCC BAA-679 / EGD-e</strain>
    </source>
</reference>
<dbReference type="EC" id="3.4.23.36" evidence="1"/>
<dbReference type="EMBL" id="AL591981">
    <property type="protein sequence ID" value="CAC99922.1"/>
    <property type="molecule type" value="Genomic_DNA"/>
</dbReference>
<dbReference type="PIR" id="AD1305">
    <property type="entry name" value="AD1305"/>
</dbReference>
<dbReference type="RefSeq" id="NP_465369.1">
    <property type="nucleotide sequence ID" value="NC_003210.1"/>
</dbReference>
<dbReference type="RefSeq" id="WP_003724127.1">
    <property type="nucleotide sequence ID" value="NZ_CP149495.1"/>
</dbReference>
<dbReference type="SMR" id="Q8Y656"/>
<dbReference type="STRING" id="169963.gene:17594529"/>
<dbReference type="PaxDb" id="169963-lmo1844"/>
<dbReference type="EnsemblBacteria" id="CAC99922">
    <property type="protein sequence ID" value="CAC99922"/>
    <property type="gene ID" value="CAC99922"/>
</dbReference>
<dbReference type="GeneID" id="985858"/>
<dbReference type="KEGG" id="lmo:lmo1844"/>
<dbReference type="PATRIC" id="fig|169963.11.peg.1889"/>
<dbReference type="eggNOG" id="COG0597">
    <property type="taxonomic scope" value="Bacteria"/>
</dbReference>
<dbReference type="HOGENOM" id="CLU_083252_3_0_9"/>
<dbReference type="OrthoDB" id="9810259at2"/>
<dbReference type="PhylomeDB" id="Q8Y656"/>
<dbReference type="BioCyc" id="LMON169963:LMO1844-MONOMER"/>
<dbReference type="UniPathway" id="UPA00665"/>
<dbReference type="Proteomes" id="UP000000817">
    <property type="component" value="Chromosome"/>
</dbReference>
<dbReference type="GO" id="GO:0005886">
    <property type="term" value="C:plasma membrane"/>
    <property type="evidence" value="ECO:0000318"/>
    <property type="project" value="GO_Central"/>
</dbReference>
<dbReference type="GO" id="GO:0004190">
    <property type="term" value="F:aspartic-type endopeptidase activity"/>
    <property type="evidence" value="ECO:0007669"/>
    <property type="project" value="UniProtKB-UniRule"/>
</dbReference>
<dbReference type="GO" id="GO:0004175">
    <property type="term" value="F:endopeptidase activity"/>
    <property type="evidence" value="ECO:0000318"/>
    <property type="project" value="GO_Central"/>
</dbReference>
<dbReference type="GO" id="GO:0006508">
    <property type="term" value="P:proteolysis"/>
    <property type="evidence" value="ECO:0007669"/>
    <property type="project" value="UniProtKB-KW"/>
</dbReference>
<dbReference type="HAMAP" id="MF_00161">
    <property type="entry name" value="LspA"/>
    <property type="match status" value="1"/>
</dbReference>
<dbReference type="InterPro" id="IPR001872">
    <property type="entry name" value="Peptidase_A8"/>
</dbReference>
<dbReference type="NCBIfam" id="TIGR00077">
    <property type="entry name" value="lspA"/>
    <property type="match status" value="1"/>
</dbReference>
<dbReference type="PANTHER" id="PTHR33695">
    <property type="entry name" value="LIPOPROTEIN SIGNAL PEPTIDASE"/>
    <property type="match status" value="1"/>
</dbReference>
<dbReference type="PANTHER" id="PTHR33695:SF1">
    <property type="entry name" value="LIPOPROTEIN SIGNAL PEPTIDASE"/>
    <property type="match status" value="1"/>
</dbReference>
<dbReference type="Pfam" id="PF01252">
    <property type="entry name" value="Peptidase_A8"/>
    <property type="match status" value="1"/>
</dbReference>
<dbReference type="PRINTS" id="PR00781">
    <property type="entry name" value="LIPOSIGPTASE"/>
</dbReference>
<dbReference type="PROSITE" id="PS00855">
    <property type="entry name" value="SPASE_II"/>
    <property type="match status" value="1"/>
</dbReference>
<evidence type="ECO:0000255" key="1">
    <source>
        <dbReference type="HAMAP-Rule" id="MF_00161"/>
    </source>
</evidence>